<sequence length="291" mass="33302">MDARAINSREKADLKYPRNTYIIGDVQGCYRELQELLELIQFDSTKDRLGFVGDLVNRGPNSLEVLRFLKSLSSPLIVLGNHDLYLLILGYGLMPEDSYEHTLHAVLQAPDKLELLEWLRHCPLIRYEKSLSAVLVHAGLPPQWNIKESILHAEEISTALKGPHYLAFLKNLFGNEPSQWKDDLEGQDRLRYICNAFTRMRFCDAKGHLDLESEGKTNQAPSRFRPWFEWRNPQEDNVDIVFGHWAALNGQSSAPHTHALDTGCAWGYKLTAINLKTKERFSVPCQSALRM</sequence>
<protein>
    <recommendedName>
        <fullName evidence="1">Bis(5'-nucleosyl)-tetraphosphatase, symmetrical</fullName>
        <ecNumber evidence="1">3.6.1.41</ecNumber>
    </recommendedName>
    <alternativeName>
        <fullName evidence="1">Ap4A hydrolase</fullName>
    </alternativeName>
    <alternativeName>
        <fullName evidence="1">Diadenosine 5',5'''-P1,P4-tetraphosphate pyrophosphohydrolase</fullName>
    </alternativeName>
    <alternativeName>
        <fullName evidence="1">Diadenosine tetraphosphatase</fullName>
    </alternativeName>
</protein>
<name>APAH_COXBN</name>
<organism>
    <name type="scientific">Coxiella burnetii (strain Dugway 5J108-111)</name>
    <dbReference type="NCBI Taxonomy" id="434922"/>
    <lineage>
        <taxon>Bacteria</taxon>
        <taxon>Pseudomonadati</taxon>
        <taxon>Pseudomonadota</taxon>
        <taxon>Gammaproteobacteria</taxon>
        <taxon>Legionellales</taxon>
        <taxon>Coxiellaceae</taxon>
        <taxon>Coxiella</taxon>
    </lineage>
</organism>
<dbReference type="EC" id="3.6.1.41" evidence="1"/>
<dbReference type="EMBL" id="CP000733">
    <property type="protein sequence ID" value="ABS77008.1"/>
    <property type="molecule type" value="Genomic_DNA"/>
</dbReference>
<dbReference type="RefSeq" id="WP_011997409.1">
    <property type="nucleotide sequence ID" value="NC_009727.1"/>
</dbReference>
<dbReference type="SMR" id="A9KH04"/>
<dbReference type="KEGG" id="cbd:CBUD_2085"/>
<dbReference type="HOGENOM" id="CLU_056184_2_0_6"/>
<dbReference type="Proteomes" id="UP000008555">
    <property type="component" value="Chromosome"/>
</dbReference>
<dbReference type="GO" id="GO:0008803">
    <property type="term" value="F:bis(5'-nucleosyl)-tetraphosphatase (symmetrical) activity"/>
    <property type="evidence" value="ECO:0007669"/>
    <property type="project" value="UniProtKB-UniRule"/>
</dbReference>
<dbReference type="CDD" id="cd07422">
    <property type="entry name" value="MPP_ApaH"/>
    <property type="match status" value="1"/>
</dbReference>
<dbReference type="Gene3D" id="3.60.21.10">
    <property type="match status" value="1"/>
</dbReference>
<dbReference type="HAMAP" id="MF_00199">
    <property type="entry name" value="ApaH"/>
    <property type="match status" value="1"/>
</dbReference>
<dbReference type="InterPro" id="IPR004617">
    <property type="entry name" value="ApaH"/>
</dbReference>
<dbReference type="InterPro" id="IPR004843">
    <property type="entry name" value="Calcineurin-like_PHP_ApaH"/>
</dbReference>
<dbReference type="InterPro" id="IPR029052">
    <property type="entry name" value="Metallo-depent_PP-like"/>
</dbReference>
<dbReference type="NCBIfam" id="TIGR00668">
    <property type="entry name" value="apaH"/>
    <property type="match status" value="1"/>
</dbReference>
<dbReference type="NCBIfam" id="NF001204">
    <property type="entry name" value="PRK00166.1"/>
    <property type="match status" value="1"/>
</dbReference>
<dbReference type="PANTHER" id="PTHR40942">
    <property type="match status" value="1"/>
</dbReference>
<dbReference type="PANTHER" id="PTHR40942:SF4">
    <property type="entry name" value="CYTOCHROME C5"/>
    <property type="match status" value="1"/>
</dbReference>
<dbReference type="Pfam" id="PF00149">
    <property type="entry name" value="Metallophos"/>
    <property type="match status" value="1"/>
</dbReference>
<dbReference type="PIRSF" id="PIRSF000903">
    <property type="entry name" value="B5n-ttraPtase_sm"/>
    <property type="match status" value="1"/>
</dbReference>
<dbReference type="SUPFAM" id="SSF56300">
    <property type="entry name" value="Metallo-dependent phosphatases"/>
    <property type="match status" value="1"/>
</dbReference>
<comment type="function">
    <text evidence="1">Hydrolyzes diadenosine 5',5'''-P1,P4-tetraphosphate to yield ADP.</text>
</comment>
<comment type="catalytic activity">
    <reaction evidence="1">
        <text>P(1),P(4)-bis(5'-adenosyl) tetraphosphate + H2O = 2 ADP + 2 H(+)</text>
        <dbReference type="Rhea" id="RHEA:24252"/>
        <dbReference type="ChEBI" id="CHEBI:15377"/>
        <dbReference type="ChEBI" id="CHEBI:15378"/>
        <dbReference type="ChEBI" id="CHEBI:58141"/>
        <dbReference type="ChEBI" id="CHEBI:456216"/>
        <dbReference type="EC" id="3.6.1.41"/>
    </reaction>
</comment>
<comment type="similarity">
    <text evidence="1">Belongs to the Ap4A hydrolase family.</text>
</comment>
<keyword id="KW-0378">Hydrolase</keyword>
<gene>
    <name evidence="1" type="primary">apaH</name>
    <name type="ordered locus">CBUD_2085</name>
</gene>
<feature type="chain" id="PRO_1000077712" description="Bis(5'-nucleosyl)-tetraphosphatase, symmetrical">
    <location>
        <begin position="1"/>
        <end position="291"/>
    </location>
</feature>
<evidence type="ECO:0000255" key="1">
    <source>
        <dbReference type="HAMAP-Rule" id="MF_00199"/>
    </source>
</evidence>
<accession>A9KH04</accession>
<reference key="1">
    <citation type="journal article" date="2009" name="Infect. Immun.">
        <title>Comparative genomics reveal extensive transposon-mediated genomic plasticity and diversity among potential effector proteins within the genus Coxiella.</title>
        <authorList>
            <person name="Beare P.A."/>
            <person name="Unsworth N."/>
            <person name="Andoh M."/>
            <person name="Voth D.E."/>
            <person name="Omsland A."/>
            <person name="Gilk S.D."/>
            <person name="Williams K.P."/>
            <person name="Sobral B.W."/>
            <person name="Kupko J.J. III"/>
            <person name="Porcella S.F."/>
            <person name="Samuel J.E."/>
            <person name="Heinzen R.A."/>
        </authorList>
    </citation>
    <scope>NUCLEOTIDE SEQUENCE [LARGE SCALE GENOMIC DNA]</scope>
    <source>
        <strain>Dugway 5J108-111</strain>
    </source>
</reference>
<proteinExistence type="inferred from homology"/>